<proteinExistence type="inferred from homology"/>
<name>MUTY_BUCAI</name>
<organism>
    <name type="scientific">Buchnera aphidicola subsp. Acyrthosiphon pisum (strain APS)</name>
    <name type="common">Acyrthosiphon pisum symbiotic bacterium</name>
    <dbReference type="NCBI Taxonomy" id="107806"/>
    <lineage>
        <taxon>Bacteria</taxon>
        <taxon>Pseudomonadati</taxon>
        <taxon>Pseudomonadota</taxon>
        <taxon>Gammaproteobacteria</taxon>
        <taxon>Enterobacterales</taxon>
        <taxon>Erwiniaceae</taxon>
        <taxon>Buchnera</taxon>
    </lineage>
</organism>
<accession>P57617</accession>
<protein>
    <recommendedName>
        <fullName>Adenine DNA glycosylase</fullName>
        <ecNumber evidence="2">3.2.2.31</ecNumber>
    </recommendedName>
</protein>
<keyword id="KW-0004">4Fe-4S</keyword>
<keyword id="KW-0227">DNA damage</keyword>
<keyword id="KW-0234">DNA repair</keyword>
<keyword id="KW-0326">Glycosidase</keyword>
<keyword id="KW-0378">Hydrolase</keyword>
<keyword id="KW-0408">Iron</keyword>
<keyword id="KW-0411">Iron-sulfur</keyword>
<keyword id="KW-0479">Metal-binding</keyword>
<keyword id="KW-1185">Reference proteome</keyword>
<comment type="function">
    <text evidence="2">Adenine glycosylase active on G-A mispairs. MutY also corrects error-prone DNA synthesis past GO lesions which are due to the oxidatively damaged form of guanine: 7,8-dihydro-8-oxoguanine (8-oxo-dGTP).</text>
</comment>
<comment type="catalytic activity">
    <reaction evidence="2">
        <text>Hydrolyzes free adenine bases from 7,8-dihydro-8-oxoguanine:adenine mismatched double-stranded DNA, leaving an apurinic site.</text>
        <dbReference type="EC" id="3.2.2.31"/>
    </reaction>
</comment>
<comment type="cofactor">
    <cofactor evidence="2">
        <name>[4Fe-4S] cluster</name>
        <dbReference type="ChEBI" id="CHEBI:49883"/>
    </cofactor>
    <text evidence="2">Binds 1 [4Fe-4S] cluster. The cluster does not appear to play a role in catalysis, but is probably involved in the proper positioning of the enzyme along the DNA strand.</text>
</comment>
<comment type="subunit">
    <text evidence="2">Monomer.</text>
</comment>
<comment type="similarity">
    <text evidence="4">Belongs to the Nth/MutY family.</text>
</comment>
<reference key="1">
    <citation type="journal article" date="2000" name="Nature">
        <title>Genome sequence of the endocellular bacterial symbiont of aphids Buchnera sp. APS.</title>
        <authorList>
            <person name="Shigenobu S."/>
            <person name="Watanabe H."/>
            <person name="Hattori M."/>
            <person name="Sakaki Y."/>
            <person name="Ishikawa H."/>
        </authorList>
    </citation>
    <scope>NUCLEOTIDE SEQUENCE [LARGE SCALE GENOMIC DNA]</scope>
    <source>
        <strain>APS</strain>
    </source>
</reference>
<gene>
    <name type="primary">mutY</name>
    <name type="ordered locus">BU552</name>
</gene>
<evidence type="ECO:0000250" key="1"/>
<evidence type="ECO:0000250" key="2">
    <source>
        <dbReference type="UniProtKB" id="P17802"/>
    </source>
</evidence>
<evidence type="ECO:0000250" key="3">
    <source>
        <dbReference type="UniProtKB" id="P83847"/>
    </source>
</evidence>
<evidence type="ECO:0000305" key="4"/>
<dbReference type="EC" id="3.2.2.31" evidence="2"/>
<dbReference type="EMBL" id="BA000003">
    <property type="protein sequence ID" value="BAB13244.1"/>
    <property type="molecule type" value="Genomic_DNA"/>
</dbReference>
<dbReference type="RefSeq" id="NP_240358.1">
    <property type="nucleotide sequence ID" value="NC_002528.1"/>
</dbReference>
<dbReference type="RefSeq" id="WP_010896160.1">
    <property type="nucleotide sequence ID" value="NC_002528.1"/>
</dbReference>
<dbReference type="SMR" id="P57617"/>
<dbReference type="STRING" id="563178.BUAP5A_545"/>
<dbReference type="EnsemblBacteria" id="BAB13244">
    <property type="protein sequence ID" value="BAB13244"/>
    <property type="gene ID" value="BAB13244"/>
</dbReference>
<dbReference type="KEGG" id="buc:BU552"/>
<dbReference type="PATRIC" id="fig|107806.10.peg.556"/>
<dbReference type="eggNOG" id="COG1194">
    <property type="taxonomic scope" value="Bacteria"/>
</dbReference>
<dbReference type="HOGENOM" id="CLU_012862_0_2_6"/>
<dbReference type="Proteomes" id="UP000001806">
    <property type="component" value="Chromosome"/>
</dbReference>
<dbReference type="GO" id="GO:0051539">
    <property type="term" value="F:4 iron, 4 sulfur cluster binding"/>
    <property type="evidence" value="ECO:0007669"/>
    <property type="project" value="UniProtKB-KW"/>
</dbReference>
<dbReference type="GO" id="GO:0034039">
    <property type="term" value="F:8-oxo-7,8-dihydroguanine DNA N-glycosylase activity"/>
    <property type="evidence" value="ECO:0007669"/>
    <property type="project" value="TreeGrafter"/>
</dbReference>
<dbReference type="GO" id="GO:0035485">
    <property type="term" value="F:adenine/guanine mispair binding"/>
    <property type="evidence" value="ECO:0007669"/>
    <property type="project" value="TreeGrafter"/>
</dbReference>
<dbReference type="GO" id="GO:0046872">
    <property type="term" value="F:metal ion binding"/>
    <property type="evidence" value="ECO:0007669"/>
    <property type="project" value="UniProtKB-KW"/>
</dbReference>
<dbReference type="GO" id="GO:0032357">
    <property type="term" value="F:oxidized purine DNA binding"/>
    <property type="evidence" value="ECO:0007669"/>
    <property type="project" value="TreeGrafter"/>
</dbReference>
<dbReference type="GO" id="GO:0000701">
    <property type="term" value="F:purine-specific mismatch base pair DNA N-glycosylase activity"/>
    <property type="evidence" value="ECO:0007669"/>
    <property type="project" value="UniProtKB-EC"/>
</dbReference>
<dbReference type="GO" id="GO:0006284">
    <property type="term" value="P:base-excision repair"/>
    <property type="evidence" value="ECO:0007669"/>
    <property type="project" value="InterPro"/>
</dbReference>
<dbReference type="GO" id="GO:0006298">
    <property type="term" value="P:mismatch repair"/>
    <property type="evidence" value="ECO:0007669"/>
    <property type="project" value="TreeGrafter"/>
</dbReference>
<dbReference type="CDD" id="cd00056">
    <property type="entry name" value="ENDO3c"/>
    <property type="match status" value="1"/>
</dbReference>
<dbReference type="CDD" id="cd03431">
    <property type="entry name" value="NUDIX_DNA_Glycosylase_C-MutY"/>
    <property type="match status" value="1"/>
</dbReference>
<dbReference type="Gene3D" id="1.10.1670.10">
    <property type="entry name" value="Helix-hairpin-Helix base-excision DNA repair enzymes (C-terminal)"/>
    <property type="match status" value="1"/>
</dbReference>
<dbReference type="Gene3D" id="1.10.340.30">
    <property type="entry name" value="Hypothetical protein, domain 2"/>
    <property type="match status" value="1"/>
</dbReference>
<dbReference type="Gene3D" id="3.90.79.10">
    <property type="entry name" value="Nucleoside Triphosphate Pyrophosphohydrolase"/>
    <property type="match status" value="1"/>
</dbReference>
<dbReference type="InterPro" id="IPR005760">
    <property type="entry name" value="A/G_AdeGlyc_MutY"/>
</dbReference>
<dbReference type="InterPro" id="IPR011257">
    <property type="entry name" value="DNA_glycosylase"/>
</dbReference>
<dbReference type="InterPro" id="IPR004036">
    <property type="entry name" value="Endonuclease-III-like_CS2"/>
</dbReference>
<dbReference type="InterPro" id="IPR004035">
    <property type="entry name" value="Endouclease-III_FeS-bd_BS"/>
</dbReference>
<dbReference type="InterPro" id="IPR003265">
    <property type="entry name" value="HhH-GPD_domain"/>
</dbReference>
<dbReference type="InterPro" id="IPR023170">
    <property type="entry name" value="HhH_base_excis_C"/>
</dbReference>
<dbReference type="InterPro" id="IPR000445">
    <property type="entry name" value="HhH_motif"/>
</dbReference>
<dbReference type="InterPro" id="IPR044298">
    <property type="entry name" value="MIG/MutY"/>
</dbReference>
<dbReference type="InterPro" id="IPR029119">
    <property type="entry name" value="MutY_C"/>
</dbReference>
<dbReference type="InterPro" id="IPR015797">
    <property type="entry name" value="NUDIX_hydrolase-like_dom_sf"/>
</dbReference>
<dbReference type="NCBIfam" id="TIGR01084">
    <property type="entry name" value="mutY"/>
    <property type="match status" value="1"/>
</dbReference>
<dbReference type="NCBIfam" id="NF008132">
    <property type="entry name" value="PRK10880.1"/>
    <property type="match status" value="1"/>
</dbReference>
<dbReference type="PANTHER" id="PTHR42944">
    <property type="entry name" value="ADENINE DNA GLYCOSYLASE"/>
    <property type="match status" value="1"/>
</dbReference>
<dbReference type="PANTHER" id="PTHR42944:SF1">
    <property type="entry name" value="ADENINE DNA GLYCOSYLASE"/>
    <property type="match status" value="1"/>
</dbReference>
<dbReference type="Pfam" id="PF00633">
    <property type="entry name" value="HHH"/>
    <property type="match status" value="1"/>
</dbReference>
<dbReference type="Pfam" id="PF00730">
    <property type="entry name" value="HhH-GPD"/>
    <property type="match status" value="1"/>
</dbReference>
<dbReference type="Pfam" id="PF14815">
    <property type="entry name" value="NUDIX_4"/>
    <property type="match status" value="1"/>
</dbReference>
<dbReference type="SMART" id="SM00478">
    <property type="entry name" value="ENDO3c"/>
    <property type="match status" value="1"/>
</dbReference>
<dbReference type="SUPFAM" id="SSF48150">
    <property type="entry name" value="DNA-glycosylase"/>
    <property type="match status" value="1"/>
</dbReference>
<dbReference type="SUPFAM" id="SSF55811">
    <property type="entry name" value="Nudix"/>
    <property type="match status" value="1"/>
</dbReference>
<dbReference type="PROSITE" id="PS00764">
    <property type="entry name" value="ENDONUCLEASE_III_1"/>
    <property type="match status" value="1"/>
</dbReference>
<dbReference type="PROSITE" id="PS01155">
    <property type="entry name" value="ENDONUCLEASE_III_2"/>
    <property type="match status" value="1"/>
</dbReference>
<sequence>MTKYIFSQLVLNWYHKNGRKDLPWQINKTLYTVWISEIMLQQTTVKSAIPYFKKFILNFPNIKSLNDSKLDDVLYLWSGLGYYNRAKNIYKSAQIIKKKYKGIFPDQFSNIIQLPGIGRSTAGAILSLSLNFFYPILDGNVKRILVRYYGISGLLKDKKIEKKLWNIIESITPIHNTGKFNQGMMDIGASICISIKPKCTICPLKKECIAQIEKKWEKYPLKNIKKTLPQKISWFIIIKHENNFWLKKNTEQEIWKELFCFPKFKNKEEALIWLKEKKININTCENMISFFHKFSHFILHINPILIRLPYISEFFKENHKKIWYNLKNPQHIGLPRPVQKILENFKKNIF</sequence>
<feature type="chain" id="PRO_0000102231" description="Adenine DNA glycosylase">
    <location>
        <begin position="1"/>
        <end position="350"/>
    </location>
</feature>
<feature type="active site" description="Proton donor/acceptor" evidence="3">
    <location>
        <position position="37"/>
    </location>
</feature>
<feature type="binding site" evidence="1">
    <location>
        <position position="192"/>
    </location>
    <ligand>
        <name>[4Fe-4S] cluster</name>
        <dbReference type="ChEBI" id="CHEBI:49883"/>
    </ligand>
</feature>
<feature type="binding site" evidence="1">
    <location>
        <position position="199"/>
    </location>
    <ligand>
        <name>[4Fe-4S] cluster</name>
        <dbReference type="ChEBI" id="CHEBI:49883"/>
    </ligand>
</feature>
<feature type="binding site" evidence="1">
    <location>
        <position position="202"/>
    </location>
    <ligand>
        <name>[4Fe-4S] cluster</name>
        <dbReference type="ChEBI" id="CHEBI:49883"/>
    </ligand>
</feature>
<feature type="binding site" evidence="1">
    <location>
        <position position="208"/>
    </location>
    <ligand>
        <name>[4Fe-4S] cluster</name>
        <dbReference type="ChEBI" id="CHEBI:49883"/>
    </ligand>
</feature>
<feature type="site" description="Transition state stabilizer" evidence="3">
    <location>
        <position position="138"/>
    </location>
</feature>